<sequence length="1319" mass="150883">MQAQQLPYEFFSEENAPKWRGLLVPALKKVQGQVHPTLESNDDALQYVEELILQLLNMLCQAQPRSASDVEERVQKSFPHPIDKWAIADAQSAIEKRKRRNPLSLPAERIHHLLREVLGYKIDHQVSVYIVAVLEYISADILKLVGNYVRNIRHYEITKQDIKVAMCADKVLMDMFHQDVEDINILSLTDEEPSTSGEQTYYDLVKAFMAEIRQYIRELNLIIKVFREPFVSNSKLFSSNDVENIFSRIVDIHELSVKLLGHIEDTVEMTDEGSPHPLVGSCFEDLAEELAFDPYESYARDILRPGFHGHFLSQLSKPGAALYLQSIGEGFKEAVQYVLPRLLLAPVYHCLHYFELLKQLEEKSEDQEDKECMKQAITALLNVQSGMEKICSKSLAKRRLSESACRFYSQQMKGKQLAIKKMNEIQKNIDGWEGKDIGQCCNEFIMEGTLTRVGAKHERHIFLFDGLMICCKSNHGQPRLPGASSAEYRLKEKFFMRKVQINDKDDTSEYKHAFEIILKDGNSVIFSAKSAEEKNNWMAALISLQYRSTLERMLDVTVLQEEKEEQMRLPSAEVYRFAEPDSEENILFEENVQPKAGIPIIKAGTVLKLIERLTYHMYADPNFVRTFLTTYRSFCRPQELLSLLIERFEIPEPEPTEADRIAIENGDQPLSAELKRFRKEYIQPVQLRVLNVCRHWVEHHFYDFERDADLLQRMEEFIGTVRGKAMKKWVESITKIIQRKKIARDNGPGHNITFQSSPPTVEWHISRPGHIETFDLLTLHPIEIARQLTLLESDLYRAVQPSELVGSVWTKEDKEINSPNLLKMIRHTTNLTLWFEKCIVETENLEERVAVVSRIIEILQVFQELNNFNGVLEVVSAMNSSPVYRLDHTFEQIPSRQKKILEEAHELSEDHYKKYLAKLRSINPPCVPFFGIYLTNILKTEEGNPEVLRRHGKELINFSKRRRVAEITGEIQQYQNQPYCLRVEPDIKRFFENLNPMGNSMEKEFTDYLFNKSLEIEPRHPKPLPRFPKKYSYPLKSPGVRPSNPRPGTMRHPTPLQQEPRKISYSRIPESETESTASAPNSPRTPLTPPPASGTSSNTDVCSVFDSDHSASPFHSRSASVSSISLSKGTDEVPVPPPVPPRRRPESAPAESSPSKIMSKHLDSPPAIPPRQPTSKAYSPRYSISDRTSISDPPESPPLLPPREPVRTPDVFSSSPLHLQPPPLGKKSDHGNAFFPNSPSPFTPPPPQTPSPHGTRRHLPSPPLTQEMDLHSIAGPPVPPRQSTSQLIPKLPPKTYKREHTHPSMHRDGPPLLENAHSS</sequence>
<organism>
    <name type="scientific">Mus musculus</name>
    <name type="common">Mouse</name>
    <dbReference type="NCBI Taxonomy" id="10090"/>
    <lineage>
        <taxon>Eukaryota</taxon>
        <taxon>Metazoa</taxon>
        <taxon>Chordata</taxon>
        <taxon>Craniata</taxon>
        <taxon>Vertebrata</taxon>
        <taxon>Euteleostomi</taxon>
        <taxon>Mammalia</taxon>
        <taxon>Eutheria</taxon>
        <taxon>Euarchontoglires</taxon>
        <taxon>Glires</taxon>
        <taxon>Rodentia</taxon>
        <taxon>Myomorpha</taxon>
        <taxon>Muroidea</taxon>
        <taxon>Muridae</taxon>
        <taxon>Murinae</taxon>
        <taxon>Mus</taxon>
        <taxon>Mus</taxon>
    </lineage>
</organism>
<accession>Q62245</accession>
<accession>Q62244</accession>
<evidence type="ECO:0000250" key="1">
    <source>
        <dbReference type="UniProtKB" id="Q07889"/>
    </source>
</evidence>
<evidence type="ECO:0000255" key="2">
    <source>
        <dbReference type="PROSITE-ProRule" id="PRU00062"/>
    </source>
</evidence>
<evidence type="ECO:0000255" key="3">
    <source>
        <dbReference type="PROSITE-ProRule" id="PRU00135"/>
    </source>
</evidence>
<evidence type="ECO:0000255" key="4">
    <source>
        <dbReference type="PROSITE-ProRule" id="PRU00145"/>
    </source>
</evidence>
<evidence type="ECO:0000255" key="5">
    <source>
        <dbReference type="PROSITE-ProRule" id="PRU00168"/>
    </source>
</evidence>
<evidence type="ECO:0000256" key="6">
    <source>
        <dbReference type="SAM" id="MobiDB-lite"/>
    </source>
</evidence>
<evidence type="ECO:0000269" key="7">
    <source>
    </source>
</evidence>
<evidence type="ECO:0000269" key="8">
    <source>
    </source>
</evidence>
<evidence type="ECO:0007744" key="9">
    <source>
    </source>
</evidence>
<evidence type="ECO:0007744" key="10">
    <source>
    </source>
</evidence>
<evidence type="ECO:0007829" key="11">
    <source>
        <dbReference type="PDB" id="1PMS"/>
    </source>
</evidence>
<keyword id="KW-0002">3D-structure</keyword>
<keyword id="KW-0344">Guanine-nucleotide releasing factor</keyword>
<keyword id="KW-0597">Phosphoprotein</keyword>
<keyword id="KW-1185">Reference proteome</keyword>
<reference key="1">
    <citation type="journal article" date="1992" name="Proc. Natl. Acad. Sci. U.S.A.">
        <title>Identification of murine homologues of the Drosophila son of sevenless gene: potential activators of ras.</title>
        <authorList>
            <person name="Bowtell D.D."/>
            <person name="Fu P."/>
            <person name="Simon M.A."/>
            <person name="Senior P.V."/>
        </authorList>
    </citation>
    <scope>NUCLEOTIDE SEQUENCE [MRNA]</scope>
    <source>
        <strain>SWR/J</strain>
        <tissue>Eye</tissue>
    </source>
</reference>
<reference key="2">
    <citation type="journal article" date="1999" name="Nature">
        <title>EPS8 and E3B1 transduce signals from Ras to Rac.</title>
        <authorList>
            <person name="Scita G."/>
            <person name="Nordstrom J."/>
            <person name="Carbone R."/>
            <person name="Tenca P."/>
            <person name="Giardina G."/>
            <person name="Gutkind S."/>
            <person name="Bjarnegard M."/>
            <person name="Betsholtz C."/>
            <person name="Di Fiore P.P."/>
        </authorList>
    </citation>
    <scope>FUNCTION</scope>
    <scope>IDENTIFICATION IN A COMPLEX WITH ABI1 AND EPS8E</scope>
</reference>
<reference key="3">
    <citation type="journal article" date="2001" name="J. Cell Biol.">
        <title>An effector region in Eps8 is responsible for the activation of the Rac-specific GEF activity of Sos-1 and for the proper localization of the Rac-based actin-polymerizing machine.</title>
        <authorList>
            <person name="Scita G."/>
            <person name="Tenca P."/>
            <person name="Areces L.B."/>
            <person name="Tocchetti A."/>
            <person name="Frittoli E."/>
            <person name="Giardina G."/>
            <person name="Ponzanelli I."/>
            <person name="Sini P."/>
            <person name="Innocenti M."/>
            <person name="Di Fiore P.P."/>
        </authorList>
    </citation>
    <scope>FUNCTION</scope>
    <scope>INTERACTION WITH EPS8</scope>
</reference>
<reference key="4">
    <citation type="journal article" date="2007" name="Mol. Cell. Proteomics">
        <title>Qualitative and quantitative analyses of protein phosphorylation in naive and stimulated mouse synaptosomal preparations.</title>
        <authorList>
            <person name="Munton R.P."/>
            <person name="Tweedie-Cullen R."/>
            <person name="Livingstone-Zatchej M."/>
            <person name="Weinandy F."/>
            <person name="Waidelich M."/>
            <person name="Longo D."/>
            <person name="Gehrig P."/>
            <person name="Potthast F."/>
            <person name="Rutishauser D."/>
            <person name="Gerrits B."/>
            <person name="Panse C."/>
            <person name="Schlapbach R."/>
            <person name="Mansuy I.M."/>
        </authorList>
    </citation>
    <scope>IDENTIFICATION BY MASS SPECTROMETRY [LARGE SCALE ANALYSIS]</scope>
    <source>
        <tissue>Brain cortex</tissue>
    </source>
</reference>
<reference key="5">
    <citation type="journal article" date="2007" name="Proc. Natl. Acad. Sci. U.S.A.">
        <title>Large-scale phosphorylation analysis of mouse liver.</title>
        <authorList>
            <person name="Villen J."/>
            <person name="Beausoleil S.A."/>
            <person name="Gerber S.A."/>
            <person name="Gygi S.P."/>
        </authorList>
    </citation>
    <scope>PHOSPHORYLATION [LARGE SCALE ANALYSIS] AT SER-1078 AND SER-1082</scope>
    <scope>IDENTIFICATION BY MASS SPECTROMETRY [LARGE SCALE ANALYSIS]</scope>
    <source>
        <tissue>Liver</tissue>
    </source>
</reference>
<reference key="6">
    <citation type="journal article" date="2010" name="Cell">
        <title>A tissue-specific atlas of mouse protein phosphorylation and expression.</title>
        <authorList>
            <person name="Huttlin E.L."/>
            <person name="Jedrychowski M.P."/>
            <person name="Elias J.E."/>
            <person name="Goswami T."/>
            <person name="Rad R."/>
            <person name="Beausoleil S.A."/>
            <person name="Villen J."/>
            <person name="Haas W."/>
            <person name="Sowa M.E."/>
            <person name="Gygi S.P."/>
        </authorList>
    </citation>
    <scope>PHOSPHORYLATION [LARGE SCALE ANALYSIS] AT SER-1082 AND SER-1261</scope>
    <scope>IDENTIFICATION BY MASS SPECTROMETRY [LARGE SCALE ANALYSIS]</scope>
    <source>
        <tissue>Brain</tissue>
        <tissue>Brown adipose tissue</tissue>
        <tissue>Kidney</tissue>
        <tissue>Liver</tissue>
        <tissue>Lung</tissue>
        <tissue>Pancreas</tissue>
        <tissue>Spleen</tissue>
        <tissue>Testis</tissue>
    </source>
</reference>
<reference key="7">
    <citation type="journal article" date="1997" name="J. Mol. Biol.">
        <title>The solution structure of the pleckstrin homology domain of mouse Son-of-sevenless 1 (mSos1).</title>
        <authorList>
            <person name="Koshiba S."/>
            <person name="Kigawa T."/>
            <person name="Kim J.-H."/>
            <person name="Shirouzu M."/>
            <person name="Bowtell D."/>
            <person name="Yokoyama S."/>
        </authorList>
    </citation>
    <scope>STRUCTURE BY NMR OF 415-548</scope>
</reference>
<feature type="chain" id="PRO_0000068895" description="Son of sevenless homolog 1">
    <location>
        <begin position="1"/>
        <end position="1319"/>
    </location>
</feature>
<feature type="domain" description="DH" evidence="2">
    <location>
        <begin position="200"/>
        <end position="390"/>
    </location>
</feature>
<feature type="domain" description="PH" evidence="4">
    <location>
        <begin position="444"/>
        <end position="548"/>
    </location>
</feature>
<feature type="domain" description="N-terminal Ras-GEF" evidence="3">
    <location>
        <begin position="597"/>
        <end position="741"/>
    </location>
</feature>
<feature type="domain" description="Ras-GEF" evidence="5">
    <location>
        <begin position="780"/>
        <end position="1019"/>
    </location>
</feature>
<feature type="region of interest" description="Disordered" evidence="6">
    <location>
        <begin position="1019"/>
        <end position="1101"/>
    </location>
</feature>
<feature type="region of interest" description="Disordered" evidence="6">
    <location>
        <begin position="1121"/>
        <end position="1319"/>
    </location>
</feature>
<feature type="compositionally biased region" description="Pro residues" evidence="6">
    <location>
        <begin position="1194"/>
        <end position="1203"/>
    </location>
</feature>
<feature type="compositionally biased region" description="Pro residues" evidence="6">
    <location>
        <begin position="1238"/>
        <end position="1250"/>
    </location>
</feature>
<feature type="compositionally biased region" description="Basic and acidic residues" evidence="6">
    <location>
        <begin position="1296"/>
        <end position="1309"/>
    </location>
</feature>
<feature type="modified residue" description="Phosphoserine" evidence="9">
    <location>
        <position position="1078"/>
    </location>
</feature>
<feature type="modified residue" description="Phosphoserine" evidence="9 10">
    <location>
        <position position="1082"/>
    </location>
</feature>
<feature type="modified residue" description="Phosphoserine; by RPS6KA3" evidence="1">
    <location>
        <position position="1120"/>
    </location>
</feature>
<feature type="modified residue" description="Phosphoserine; by RPS6KA3" evidence="1">
    <location>
        <position position="1147"/>
    </location>
</feature>
<feature type="modified residue" description="Phosphoserine" evidence="1">
    <location>
        <position position="1164"/>
    </location>
</feature>
<feature type="modified residue" description="Phosphoserine" evidence="1">
    <location>
        <position position="1196"/>
    </location>
</feature>
<feature type="modified residue" description="Phosphoserine" evidence="1">
    <location>
        <position position="1215"/>
    </location>
</feature>
<feature type="modified residue" description="Phosphoserine" evidence="10">
    <location>
        <position position="1261"/>
    </location>
</feature>
<feature type="turn" evidence="11">
    <location>
        <begin position="416"/>
        <end position="418"/>
    </location>
</feature>
<feature type="helix" evidence="11">
    <location>
        <begin position="419"/>
        <end position="427"/>
    </location>
</feature>
<feature type="strand" evidence="11">
    <location>
        <begin position="437"/>
        <end position="441"/>
    </location>
</feature>
<feature type="turn" evidence="11">
    <location>
        <begin position="443"/>
        <end position="445"/>
    </location>
</feature>
<feature type="strand" evidence="11">
    <location>
        <begin position="446"/>
        <end position="454"/>
    </location>
</feature>
<feature type="strand" evidence="11">
    <location>
        <begin position="459"/>
        <end position="463"/>
    </location>
</feature>
<feature type="strand" evidence="11">
    <location>
        <begin position="465"/>
        <end position="471"/>
    </location>
</feature>
<feature type="strand" evidence="11">
    <location>
        <begin position="481"/>
        <end position="484"/>
    </location>
</feature>
<feature type="strand" evidence="11">
    <location>
        <begin position="490"/>
        <end position="495"/>
    </location>
</feature>
<feature type="strand" evidence="11">
    <location>
        <begin position="500"/>
        <end position="502"/>
    </location>
</feature>
<feature type="strand" evidence="11">
    <location>
        <begin position="514"/>
        <end position="517"/>
    </location>
</feature>
<feature type="strand" evidence="11">
    <location>
        <begin position="519"/>
        <end position="521"/>
    </location>
</feature>
<feature type="strand" evidence="11">
    <location>
        <begin position="523"/>
        <end position="527"/>
    </location>
</feature>
<feature type="strand" evidence="11">
    <location>
        <begin position="529"/>
        <end position="531"/>
    </location>
</feature>
<feature type="helix" evidence="11">
    <location>
        <begin position="532"/>
        <end position="545"/>
    </location>
</feature>
<protein>
    <recommendedName>
        <fullName>Son of sevenless homolog 1</fullName>
        <shortName>SOS-1</shortName>
        <shortName>mSOS-1</shortName>
    </recommendedName>
</protein>
<proteinExistence type="evidence at protein level"/>
<dbReference type="EMBL" id="Z11574">
    <property type="protein sequence ID" value="CAA77662.1"/>
    <property type="molecule type" value="mRNA"/>
</dbReference>
<dbReference type="EMBL" id="Z11578">
    <property type="protein sequence ID" value="CAA77665.1"/>
    <property type="molecule type" value="mRNA"/>
</dbReference>
<dbReference type="CCDS" id="CCDS37704.1"/>
<dbReference type="PIR" id="S25715">
    <property type="entry name" value="S25715"/>
</dbReference>
<dbReference type="PIR" id="S25716">
    <property type="entry name" value="S25716"/>
</dbReference>
<dbReference type="RefSeq" id="NP_033257.2">
    <property type="nucleotide sequence ID" value="NM_009231.2"/>
</dbReference>
<dbReference type="PDB" id="1B07">
    <property type="method" value="X-ray"/>
    <property type="resolution" value="2.50 A"/>
    <property type="chains" value="C=1135-1144"/>
</dbReference>
<dbReference type="PDB" id="1GBQ">
    <property type="method" value="NMR"/>
    <property type="chains" value="B=1135-1144"/>
</dbReference>
<dbReference type="PDB" id="1PMS">
    <property type="method" value="NMR"/>
    <property type="chains" value="A=414-548"/>
</dbReference>
<dbReference type="PDB" id="2GBQ">
    <property type="method" value="NMR"/>
    <property type="chains" value="B=1135-1144"/>
</dbReference>
<dbReference type="PDB" id="3GBQ">
    <property type="method" value="NMR"/>
    <property type="chains" value="B=1135-1144"/>
</dbReference>
<dbReference type="PDB" id="4GBQ">
    <property type="method" value="NMR"/>
    <property type="chains" value="B=1135-1144"/>
</dbReference>
<dbReference type="PDBsum" id="1B07"/>
<dbReference type="PDBsum" id="1GBQ"/>
<dbReference type="PDBsum" id="1PMS"/>
<dbReference type="PDBsum" id="2GBQ"/>
<dbReference type="PDBsum" id="3GBQ"/>
<dbReference type="PDBsum" id="4GBQ"/>
<dbReference type="SMR" id="Q62245"/>
<dbReference type="BioGRID" id="203394">
    <property type="interactions" value="41"/>
</dbReference>
<dbReference type="ComplexPortal" id="CPX-413">
    <property type="entry name" value="GTPase Hras - Son of sevenless homolog 1 complex"/>
</dbReference>
<dbReference type="CORUM" id="Q62245"/>
<dbReference type="DIP" id="DIP-29230N"/>
<dbReference type="FunCoup" id="Q62245">
    <property type="interactions" value="4197"/>
</dbReference>
<dbReference type="IntAct" id="Q62245">
    <property type="interactions" value="19"/>
</dbReference>
<dbReference type="MINT" id="Q62245"/>
<dbReference type="STRING" id="10090.ENSMUSP00000067786"/>
<dbReference type="ChEMBL" id="CHEMBL4523334"/>
<dbReference type="iPTMnet" id="Q62245"/>
<dbReference type="PhosphoSitePlus" id="Q62245"/>
<dbReference type="jPOST" id="Q62245"/>
<dbReference type="PaxDb" id="10090-ENSMUSP00000067786"/>
<dbReference type="ProteomicsDB" id="261551"/>
<dbReference type="Pumba" id="Q62245"/>
<dbReference type="Antibodypedia" id="2769">
    <property type="antibodies" value="238 antibodies from 36 providers"/>
</dbReference>
<dbReference type="DNASU" id="20662"/>
<dbReference type="Ensembl" id="ENSMUST00000068714.7">
    <property type="protein sequence ID" value="ENSMUSP00000067786.6"/>
    <property type="gene ID" value="ENSMUSG00000024241.8"/>
</dbReference>
<dbReference type="GeneID" id="20662"/>
<dbReference type="KEGG" id="mmu:20662"/>
<dbReference type="UCSC" id="uc008drg.1">
    <property type="organism name" value="mouse"/>
</dbReference>
<dbReference type="AGR" id="MGI:98354"/>
<dbReference type="CTD" id="6654"/>
<dbReference type="MGI" id="MGI:98354">
    <property type="gene designation" value="Sos1"/>
</dbReference>
<dbReference type="VEuPathDB" id="HostDB:ENSMUSG00000024241"/>
<dbReference type="eggNOG" id="KOG3417">
    <property type="taxonomic scope" value="Eukaryota"/>
</dbReference>
<dbReference type="GeneTree" id="ENSGT00940000155423"/>
<dbReference type="HOGENOM" id="CLU_002744_0_0_1"/>
<dbReference type="InParanoid" id="Q62245"/>
<dbReference type="OMA" id="PPLQYEF"/>
<dbReference type="OrthoDB" id="546434at2759"/>
<dbReference type="PhylomeDB" id="Q62245"/>
<dbReference type="TreeFam" id="TF317296"/>
<dbReference type="Reactome" id="R-MMU-112412">
    <property type="pathway name" value="SOS-mediated signalling"/>
</dbReference>
<dbReference type="Reactome" id="R-MMU-1250347">
    <property type="pathway name" value="SHC1 events in ERBB4 signaling"/>
</dbReference>
<dbReference type="Reactome" id="R-MMU-1433557">
    <property type="pathway name" value="Signaling by SCF-KIT"/>
</dbReference>
<dbReference type="Reactome" id="R-MMU-1433559">
    <property type="pathway name" value="Regulation of KIT signaling"/>
</dbReference>
<dbReference type="Reactome" id="R-MMU-167044">
    <property type="pathway name" value="Signalling to RAS"/>
</dbReference>
<dbReference type="Reactome" id="R-MMU-179812">
    <property type="pathway name" value="GRB2 events in EGFR signaling"/>
</dbReference>
<dbReference type="Reactome" id="R-MMU-180336">
    <property type="pathway name" value="SHC1 events in EGFR signaling"/>
</dbReference>
<dbReference type="Reactome" id="R-MMU-186763">
    <property type="pathway name" value="Downstream signal transduction"/>
</dbReference>
<dbReference type="Reactome" id="R-MMU-193648">
    <property type="pathway name" value="NRAGE signals death through JNK"/>
</dbReference>
<dbReference type="Reactome" id="R-MMU-1963640">
    <property type="pathway name" value="GRB2 events in ERBB2 signaling"/>
</dbReference>
<dbReference type="Reactome" id="R-MMU-210993">
    <property type="pathway name" value="Tie2 Signaling"/>
</dbReference>
<dbReference type="Reactome" id="R-MMU-2179392">
    <property type="pathway name" value="EGFR Transactivation by Gastrin"/>
</dbReference>
<dbReference type="Reactome" id="R-MMU-2424491">
    <property type="pathway name" value="DAP12 signaling"/>
</dbReference>
<dbReference type="Reactome" id="R-MMU-2428933">
    <property type="pathway name" value="SHC-related events triggered by IGF1R"/>
</dbReference>
<dbReference type="Reactome" id="R-MMU-2730905">
    <property type="pathway name" value="Role of LAT2/NTAL/LAB on calcium mobilization"/>
</dbReference>
<dbReference type="Reactome" id="R-MMU-2871796">
    <property type="pathway name" value="FCERI mediated MAPK activation"/>
</dbReference>
<dbReference type="Reactome" id="R-MMU-2871809">
    <property type="pathway name" value="FCERI mediated Ca+2 mobilization"/>
</dbReference>
<dbReference type="Reactome" id="R-MMU-354194">
    <property type="pathway name" value="GRB2:SOS provides linkage to MAPK signaling for Integrins"/>
</dbReference>
<dbReference type="Reactome" id="R-MMU-375165">
    <property type="pathway name" value="NCAM signaling for neurite out-growth"/>
</dbReference>
<dbReference type="Reactome" id="R-MMU-416482">
    <property type="pathway name" value="G alpha (12/13) signalling events"/>
</dbReference>
<dbReference type="Reactome" id="R-MMU-5654688">
    <property type="pathway name" value="SHC-mediated cascade:FGFR1"/>
</dbReference>
<dbReference type="Reactome" id="R-MMU-5654693">
    <property type="pathway name" value="FRS-mediated FGFR1 signaling"/>
</dbReference>
<dbReference type="Reactome" id="R-MMU-5654699">
    <property type="pathway name" value="SHC-mediated cascade:FGFR2"/>
</dbReference>
<dbReference type="Reactome" id="R-MMU-5654700">
    <property type="pathway name" value="FRS-mediated FGFR2 signaling"/>
</dbReference>
<dbReference type="Reactome" id="R-MMU-5654704">
    <property type="pathway name" value="SHC-mediated cascade:FGFR3"/>
</dbReference>
<dbReference type="Reactome" id="R-MMU-5654706">
    <property type="pathway name" value="FRS-mediated FGFR3 signaling"/>
</dbReference>
<dbReference type="Reactome" id="R-MMU-5654712">
    <property type="pathway name" value="FRS-mediated FGFR4 signaling"/>
</dbReference>
<dbReference type="Reactome" id="R-MMU-5654719">
    <property type="pathway name" value="SHC-mediated cascade:FGFR4"/>
</dbReference>
<dbReference type="Reactome" id="R-MMU-5673001">
    <property type="pathway name" value="RAF/MAP kinase cascade"/>
</dbReference>
<dbReference type="Reactome" id="R-MMU-74749">
    <property type="pathway name" value="Signal attenuation"/>
</dbReference>
<dbReference type="Reactome" id="R-MMU-74751">
    <property type="pathway name" value="Insulin receptor signalling cascade"/>
</dbReference>
<dbReference type="Reactome" id="R-MMU-8851805">
    <property type="pathway name" value="MET activates RAS signaling"/>
</dbReference>
<dbReference type="Reactome" id="R-MMU-8853659">
    <property type="pathway name" value="RET signaling"/>
</dbReference>
<dbReference type="Reactome" id="R-MMU-8983432">
    <property type="pathway name" value="Interleukin-15 signaling"/>
</dbReference>
<dbReference type="Reactome" id="R-MMU-9013149">
    <property type="pathway name" value="RAC1 GTPase cycle"/>
</dbReference>
<dbReference type="Reactome" id="R-MMU-9028731">
    <property type="pathway name" value="Activated NTRK2 signals through FRS2 and FRS3"/>
</dbReference>
<dbReference type="Reactome" id="R-MMU-912526">
    <property type="pathway name" value="Interleukin receptor SHC signaling"/>
</dbReference>
<dbReference type="Reactome" id="R-MMU-9607240">
    <property type="pathway name" value="FLT3 Signaling"/>
</dbReference>
<dbReference type="Reactome" id="R-MMU-983695">
    <property type="pathway name" value="Antigen activates B Cell Receptor (BCR) leading to generation of second messengers"/>
</dbReference>
<dbReference type="Reactome" id="R-MMU-9842663">
    <property type="pathway name" value="Signaling by LTK"/>
</dbReference>
<dbReference type="BioGRID-ORCS" id="20662">
    <property type="hits" value="12 hits in 79 CRISPR screens"/>
</dbReference>
<dbReference type="ChiTaRS" id="Sos1">
    <property type="organism name" value="mouse"/>
</dbReference>
<dbReference type="EvolutionaryTrace" id="Q62245"/>
<dbReference type="PRO" id="PR:Q62245"/>
<dbReference type="Proteomes" id="UP000000589">
    <property type="component" value="Chromosome 17"/>
</dbReference>
<dbReference type="RNAct" id="Q62245">
    <property type="molecule type" value="protein"/>
</dbReference>
<dbReference type="Bgee" id="ENSMUSG00000024241">
    <property type="expression patterns" value="Expressed in medial preoptic region and 238 other cell types or tissues"/>
</dbReference>
<dbReference type="GO" id="GO:0005829">
    <property type="term" value="C:cytosol"/>
    <property type="evidence" value="ECO:0000304"/>
    <property type="project" value="Reactome"/>
</dbReference>
<dbReference type="GO" id="GO:0098978">
    <property type="term" value="C:glutamatergic synapse"/>
    <property type="evidence" value="ECO:0007669"/>
    <property type="project" value="Ensembl"/>
</dbReference>
<dbReference type="GO" id="GO:1905360">
    <property type="term" value="C:GTPase complex"/>
    <property type="evidence" value="ECO:0000266"/>
    <property type="project" value="ComplexPortal"/>
</dbReference>
<dbReference type="GO" id="GO:0043025">
    <property type="term" value="C:neuronal cell body"/>
    <property type="evidence" value="ECO:0007669"/>
    <property type="project" value="Ensembl"/>
</dbReference>
<dbReference type="GO" id="GO:0014069">
    <property type="term" value="C:postsynaptic density"/>
    <property type="evidence" value="ECO:0007669"/>
    <property type="project" value="Ensembl"/>
</dbReference>
<dbReference type="GO" id="GO:0005154">
    <property type="term" value="F:epidermal growth factor receptor binding"/>
    <property type="evidence" value="ECO:0007669"/>
    <property type="project" value="Ensembl"/>
</dbReference>
<dbReference type="GO" id="GO:0005085">
    <property type="term" value="F:guanyl-nucleotide exchange factor activity"/>
    <property type="evidence" value="ECO:0000314"/>
    <property type="project" value="MGI"/>
</dbReference>
<dbReference type="GO" id="GO:0140693">
    <property type="term" value="F:molecular condensate scaffold activity"/>
    <property type="evidence" value="ECO:0007669"/>
    <property type="project" value="Ensembl"/>
</dbReference>
<dbReference type="GO" id="GO:0046982">
    <property type="term" value="F:protein heterodimerization activity"/>
    <property type="evidence" value="ECO:0007669"/>
    <property type="project" value="InterPro"/>
</dbReference>
<dbReference type="GO" id="GO:0019901">
    <property type="term" value="F:protein kinase binding"/>
    <property type="evidence" value="ECO:0000353"/>
    <property type="project" value="ARUK-UCL"/>
</dbReference>
<dbReference type="GO" id="GO:0017124">
    <property type="term" value="F:SH3 domain binding"/>
    <property type="evidence" value="ECO:0007669"/>
    <property type="project" value="Ensembl"/>
</dbReference>
<dbReference type="GO" id="GO:0001782">
    <property type="term" value="P:B cell homeostasis"/>
    <property type="evidence" value="ECO:0000316"/>
    <property type="project" value="MGI"/>
</dbReference>
<dbReference type="GO" id="GO:0050853">
    <property type="term" value="P:B cell receptor signaling pathway"/>
    <property type="evidence" value="ECO:0000316"/>
    <property type="project" value="MGI"/>
</dbReference>
<dbReference type="GO" id="GO:0048514">
    <property type="term" value="P:blood vessel morphogenesis"/>
    <property type="evidence" value="ECO:0000315"/>
    <property type="project" value="MGI"/>
</dbReference>
<dbReference type="GO" id="GO:0003209">
    <property type="term" value="P:cardiac atrium morphogenesis"/>
    <property type="evidence" value="ECO:0000315"/>
    <property type="project" value="MGI"/>
</dbReference>
<dbReference type="GO" id="GO:0007173">
    <property type="term" value="P:epidermal growth factor receptor signaling pathway"/>
    <property type="evidence" value="ECO:0000315"/>
    <property type="project" value="MGI"/>
</dbReference>
<dbReference type="GO" id="GO:0038133">
    <property type="term" value="P:ERBB2-ERBB3 signaling pathway"/>
    <property type="evidence" value="ECO:0000266"/>
    <property type="project" value="MGI"/>
</dbReference>
<dbReference type="GO" id="GO:0061029">
    <property type="term" value="P:eyelid development in camera-type eye"/>
    <property type="evidence" value="ECO:0000316"/>
    <property type="project" value="MGI"/>
</dbReference>
<dbReference type="GO" id="GO:0008543">
    <property type="term" value="P:fibroblast growth factor receptor signaling pathway"/>
    <property type="evidence" value="ECO:0000316"/>
    <property type="project" value="MGI"/>
</dbReference>
<dbReference type="GO" id="GO:0001942">
    <property type="term" value="P:hair follicle development"/>
    <property type="evidence" value="ECO:0000316"/>
    <property type="project" value="MGI"/>
</dbReference>
<dbReference type="GO" id="GO:0003007">
    <property type="term" value="P:heart morphogenesis"/>
    <property type="evidence" value="ECO:0000315"/>
    <property type="project" value="MGI"/>
</dbReference>
<dbReference type="GO" id="GO:0061384">
    <property type="term" value="P:heart trabecula morphogenesis"/>
    <property type="evidence" value="ECO:0000315"/>
    <property type="project" value="MGI"/>
</dbReference>
<dbReference type="GO" id="GO:0008286">
    <property type="term" value="P:insulin receptor signaling pathway"/>
    <property type="evidence" value="ECO:0000314"/>
    <property type="project" value="MGI"/>
</dbReference>
<dbReference type="GO" id="GO:0048009">
    <property type="term" value="P:insulin-like growth factor receptor signaling pathway"/>
    <property type="evidence" value="ECO:0000314"/>
    <property type="project" value="MGI"/>
</dbReference>
<dbReference type="GO" id="GO:0002260">
    <property type="term" value="P:lymphocyte homeostasis"/>
    <property type="evidence" value="ECO:0000316"/>
    <property type="project" value="MGI"/>
</dbReference>
<dbReference type="GO" id="GO:1904693">
    <property type="term" value="P:midbrain morphogenesis"/>
    <property type="evidence" value="ECO:0000315"/>
    <property type="project" value="MGI"/>
</dbReference>
<dbReference type="GO" id="GO:0035264">
    <property type="term" value="P:multicellular organism growth"/>
    <property type="evidence" value="ECO:0000315"/>
    <property type="project" value="MGI"/>
</dbReference>
<dbReference type="GO" id="GO:0042552">
    <property type="term" value="P:myelination"/>
    <property type="evidence" value="ECO:0000315"/>
    <property type="project" value="MGI"/>
</dbReference>
<dbReference type="GO" id="GO:0048011">
    <property type="term" value="P:neurotrophin TRK receptor signaling pathway"/>
    <property type="evidence" value="ECO:0007669"/>
    <property type="project" value="Ensembl"/>
</dbReference>
<dbReference type="GO" id="GO:0003344">
    <property type="term" value="P:pericardium morphogenesis"/>
    <property type="evidence" value="ECO:0000315"/>
    <property type="project" value="MGI"/>
</dbReference>
<dbReference type="GO" id="GO:0045742">
    <property type="term" value="P:positive regulation of epidermal growth factor receptor signaling pathway"/>
    <property type="evidence" value="ECO:0007669"/>
    <property type="project" value="Ensembl"/>
</dbReference>
<dbReference type="GO" id="GO:0046579">
    <property type="term" value="P:positive regulation of Ras protein signal transduction"/>
    <property type="evidence" value="ECO:0000304"/>
    <property type="project" value="ARUK-UCL"/>
</dbReference>
<dbReference type="GO" id="GO:0007265">
    <property type="term" value="P:Ras protein signal transduction"/>
    <property type="evidence" value="ECO:0000266"/>
    <property type="project" value="MGI"/>
</dbReference>
<dbReference type="GO" id="GO:0042127">
    <property type="term" value="P:regulation of cell population proliferation"/>
    <property type="evidence" value="ECO:0000266"/>
    <property type="project" value="ComplexPortal"/>
</dbReference>
<dbReference type="GO" id="GO:2000973">
    <property type="term" value="P:regulation of pro-B cell differentiation"/>
    <property type="evidence" value="ECO:0000316"/>
    <property type="project" value="MGI"/>
</dbReference>
<dbReference type="GO" id="GO:0033081">
    <property type="term" value="P:regulation of T cell differentiation in thymus"/>
    <property type="evidence" value="ECO:0000316"/>
    <property type="project" value="MGI"/>
</dbReference>
<dbReference type="GO" id="GO:0042129">
    <property type="term" value="P:regulation of T cell proliferation"/>
    <property type="evidence" value="ECO:0000316"/>
    <property type="project" value="MGI"/>
</dbReference>
<dbReference type="GO" id="GO:0006357">
    <property type="term" value="P:regulation of transcription by RNA polymerase II"/>
    <property type="evidence" value="ECO:0000266"/>
    <property type="project" value="ComplexPortal"/>
</dbReference>
<dbReference type="GO" id="GO:0002931">
    <property type="term" value="P:response to ischemia"/>
    <property type="evidence" value="ECO:0007669"/>
    <property type="project" value="Ensembl"/>
</dbReference>
<dbReference type="GO" id="GO:0060021">
    <property type="term" value="P:roof of mouth development"/>
    <property type="evidence" value="ECO:0000315"/>
    <property type="project" value="MGI"/>
</dbReference>
<dbReference type="GO" id="GO:0014044">
    <property type="term" value="P:Schwann cell development"/>
    <property type="evidence" value="ECO:0000315"/>
    <property type="project" value="MGI"/>
</dbReference>
<dbReference type="GO" id="GO:0007264">
    <property type="term" value="P:small GTPase-mediated signal transduction"/>
    <property type="evidence" value="ECO:0000315"/>
    <property type="project" value="MGI"/>
</dbReference>
<dbReference type="GO" id="GO:0042110">
    <property type="term" value="P:T cell activation"/>
    <property type="evidence" value="ECO:0007669"/>
    <property type="project" value="Ensembl"/>
</dbReference>
<dbReference type="GO" id="GO:0007296">
    <property type="term" value="P:vitellogenesis"/>
    <property type="evidence" value="ECO:0000315"/>
    <property type="project" value="MGI"/>
</dbReference>
<dbReference type="CDD" id="cd22914">
    <property type="entry name" value="HFD_SOS1_rpt1"/>
    <property type="match status" value="1"/>
</dbReference>
<dbReference type="CDD" id="cd22915">
    <property type="entry name" value="HFD_SOS1_rpt2"/>
    <property type="match status" value="1"/>
</dbReference>
<dbReference type="CDD" id="cd01261">
    <property type="entry name" value="PH_SOS"/>
    <property type="match status" value="1"/>
</dbReference>
<dbReference type="CDD" id="cd00155">
    <property type="entry name" value="RasGEF"/>
    <property type="match status" value="1"/>
</dbReference>
<dbReference type="CDD" id="cd06224">
    <property type="entry name" value="REM"/>
    <property type="match status" value="1"/>
</dbReference>
<dbReference type="CDD" id="cd00160">
    <property type="entry name" value="RhoGEF"/>
    <property type="match status" value="1"/>
</dbReference>
<dbReference type="FunFam" id="2.30.29.30:FF:000068">
    <property type="entry name" value="Son of sevenless homolog 1 (Drosophila)"/>
    <property type="match status" value="1"/>
</dbReference>
<dbReference type="FunFam" id="1.10.20.10:FF:000029">
    <property type="entry name" value="son of sevenless homolog 1 isoform X1"/>
    <property type="match status" value="1"/>
</dbReference>
<dbReference type="FunFam" id="1.20.900.10:FF:000015">
    <property type="entry name" value="son of sevenless homolog 1 isoform X1"/>
    <property type="match status" value="1"/>
</dbReference>
<dbReference type="Gene3D" id="6.10.250.3060">
    <property type="match status" value="1"/>
</dbReference>
<dbReference type="Gene3D" id="1.20.900.10">
    <property type="entry name" value="Dbl homology (DH) domain"/>
    <property type="match status" value="1"/>
</dbReference>
<dbReference type="Gene3D" id="1.10.20.10">
    <property type="entry name" value="Histone, subunit A"/>
    <property type="match status" value="1"/>
</dbReference>
<dbReference type="Gene3D" id="2.30.29.30">
    <property type="entry name" value="Pleckstrin-homology domain (PH domain)/Phosphotyrosine-binding domain (PTB)"/>
    <property type="match status" value="1"/>
</dbReference>
<dbReference type="Gene3D" id="1.10.840.10">
    <property type="entry name" value="Ras guanine-nucleotide exchange factors catalytic domain"/>
    <property type="match status" value="1"/>
</dbReference>
<dbReference type="Gene3D" id="1.20.870.10">
    <property type="entry name" value="Son of sevenless (SoS) protein Chain: S domain 1"/>
    <property type="match status" value="1"/>
</dbReference>
<dbReference type="InterPro" id="IPR035899">
    <property type="entry name" value="DBL_dom_sf"/>
</dbReference>
<dbReference type="InterPro" id="IPR000219">
    <property type="entry name" value="DH_dom"/>
</dbReference>
<dbReference type="InterPro" id="IPR009072">
    <property type="entry name" value="Histone-fold"/>
</dbReference>
<dbReference type="InterPro" id="IPR011993">
    <property type="entry name" value="PH-like_dom_sf"/>
</dbReference>
<dbReference type="InterPro" id="IPR001849">
    <property type="entry name" value="PH_domain"/>
</dbReference>
<dbReference type="InterPro" id="IPR008937">
    <property type="entry name" value="Ras-like_GEF"/>
</dbReference>
<dbReference type="InterPro" id="IPR000651">
    <property type="entry name" value="Ras-like_Gua-exchang_fac_N"/>
</dbReference>
<dbReference type="InterPro" id="IPR019804">
    <property type="entry name" value="Ras_G-nucl-exch_fac_CS"/>
</dbReference>
<dbReference type="InterPro" id="IPR023578">
    <property type="entry name" value="Ras_GEF_dom_sf"/>
</dbReference>
<dbReference type="InterPro" id="IPR001895">
    <property type="entry name" value="RASGEF_cat_dom"/>
</dbReference>
<dbReference type="InterPro" id="IPR036964">
    <property type="entry name" value="RASGEF_cat_dom_sf"/>
</dbReference>
<dbReference type="InterPro" id="IPR055251">
    <property type="entry name" value="SOS1_NGEF_PH"/>
</dbReference>
<dbReference type="PANTHER" id="PTHR23113">
    <property type="entry name" value="GUANINE NUCLEOTIDE EXCHANGE FACTOR"/>
    <property type="match status" value="1"/>
</dbReference>
<dbReference type="PANTHER" id="PTHR23113:SF168">
    <property type="entry name" value="SON OF SEVENLESS HOMOLOG 1"/>
    <property type="match status" value="1"/>
</dbReference>
<dbReference type="Pfam" id="PF00617">
    <property type="entry name" value="RasGEF"/>
    <property type="match status" value="1"/>
</dbReference>
<dbReference type="Pfam" id="PF00618">
    <property type="entry name" value="RasGEF_N"/>
    <property type="match status" value="1"/>
</dbReference>
<dbReference type="Pfam" id="PF00621">
    <property type="entry name" value="RhoGEF"/>
    <property type="match status" value="1"/>
</dbReference>
<dbReference type="Pfam" id="PF22697">
    <property type="entry name" value="SOS1_NGEF_PH"/>
    <property type="match status" value="1"/>
</dbReference>
<dbReference type="SMART" id="SM00233">
    <property type="entry name" value="PH"/>
    <property type="match status" value="1"/>
</dbReference>
<dbReference type="SMART" id="SM00147">
    <property type="entry name" value="RasGEF"/>
    <property type="match status" value="1"/>
</dbReference>
<dbReference type="SMART" id="SM00229">
    <property type="entry name" value="RasGEFN"/>
    <property type="match status" value="1"/>
</dbReference>
<dbReference type="SMART" id="SM00325">
    <property type="entry name" value="RhoGEF"/>
    <property type="match status" value="1"/>
</dbReference>
<dbReference type="SUPFAM" id="SSF48065">
    <property type="entry name" value="DBL homology domain (DH-domain)"/>
    <property type="match status" value="1"/>
</dbReference>
<dbReference type="SUPFAM" id="SSF47113">
    <property type="entry name" value="Histone-fold"/>
    <property type="match status" value="1"/>
</dbReference>
<dbReference type="SUPFAM" id="SSF50729">
    <property type="entry name" value="PH domain-like"/>
    <property type="match status" value="1"/>
</dbReference>
<dbReference type="SUPFAM" id="SSF48366">
    <property type="entry name" value="Ras GEF"/>
    <property type="match status" value="1"/>
</dbReference>
<dbReference type="PROSITE" id="PS50010">
    <property type="entry name" value="DH_2"/>
    <property type="match status" value="1"/>
</dbReference>
<dbReference type="PROSITE" id="PS50003">
    <property type="entry name" value="PH_DOMAIN"/>
    <property type="match status" value="1"/>
</dbReference>
<dbReference type="PROSITE" id="PS00720">
    <property type="entry name" value="RASGEF"/>
    <property type="match status" value="1"/>
</dbReference>
<dbReference type="PROSITE" id="PS50009">
    <property type="entry name" value="RASGEF_CAT"/>
    <property type="match status" value="1"/>
</dbReference>
<dbReference type="PROSITE" id="PS50212">
    <property type="entry name" value="RASGEF_NTER"/>
    <property type="match status" value="1"/>
</dbReference>
<gene>
    <name type="primary">Sos1</name>
</gene>
<name>SOS1_MOUSE</name>
<comment type="function">
    <text evidence="1 7 8">Promotes the exchange of Ras-bound GDP by GTP. Probably by promoting Ras activation, regulates phosphorylation of MAP kinase MAPK3 in response to EGF (By similarity). Catalytic component of a trimeric complex that participates in transduction of signals from Ras to Rac by promoting the Rac-specific guanine nucleotide exchange factor (GEF) activity (PubMed:10499589, PubMed:11524436).</text>
</comment>
<comment type="subunit">
    <text evidence="1 7 8">Interacts (via C-terminus) with GRB2 (via SH3 domain). Forms a complex with phosphorylated MUC1 and GRB2 (via its SH3 domains). Interacts with phosphorylated LAT2. Interacts with NCK1 and NCK2 (By similarity). Part of a complex consisting of ABI1, EPS8 and SOS1 (PubMed:10499589, PubMed:11524436). Interacts (Ser-1120 and Ser-1147 phosphorylated form) with YWHAB and YWHAE (By similarity).</text>
</comment>
<comment type="interaction">
    <interactant intactId="EBI-1693">
        <id>Q62245</id>
    </interactant>
    <interactant intactId="EBI-1688">
        <id>Q60631</id>
        <label>Grb2</label>
    </interactant>
    <organismsDiffer>false</organismsDiffer>
    <experiments>7</experiments>
</comment>
<comment type="interaction">
    <interactant intactId="EBI-1693">
        <id>Q62245</id>
    </interactant>
    <interactant intactId="EBI-401755">
        <id>P62993</id>
        <label>GRB2</label>
    </interactant>
    <organismsDiffer>true</organismsDiffer>
    <experiments>4</experiments>
</comment>
<comment type="interaction">
    <interactant intactId="EBI-1693">
        <id>Q62245</id>
    </interactant>
    <interactant intactId="EBI-15787932">
        <id>P62993-1</id>
        <label>GRB2</label>
    </interactant>
    <organismsDiffer>true</organismsDiffer>
    <experiments>2</experiments>
</comment>
<comment type="interaction">
    <interactant intactId="EBI-1693">
        <id>Q62245</id>
    </interactant>
    <interactant intactId="EBI-315286">
        <id>P29355</id>
        <label>sem-5</label>
    </interactant>
    <organismsDiffer>true</organismsDiffer>
    <experiments>2</experiments>
</comment>
<comment type="interaction">
    <interactant intactId="EBI-1693">
        <id>Q62245</id>
    </interactant>
    <interactant intactId="EBI-6857429">
        <id>P26663</id>
    </interactant>
    <organismsDiffer>true</organismsDiffer>
    <experiments>2</experiments>
</comment>
<comment type="tissue specificity">
    <text>Expressed in most embryonic and adult tissues.</text>
</comment>
<comment type="PTM">
    <text evidence="1">Phosphorylation at Ser-1120 and Ser-1147 by RPS6KA3 create YWHAB and YWHAE binding sites and which contribute to the negative regulation of EGF-induced MAPK1/3 phosphorylation.</text>
</comment>